<dbReference type="EC" id="3.2.-.-" evidence="1"/>
<dbReference type="EMBL" id="CP000800">
    <property type="protein sequence ID" value="ABV18200.1"/>
    <property type="molecule type" value="Genomic_DNA"/>
</dbReference>
<dbReference type="RefSeq" id="WP_001239158.1">
    <property type="nucleotide sequence ID" value="NC_009801.1"/>
</dbReference>
<dbReference type="SMR" id="A7ZHB9"/>
<dbReference type="KEGG" id="ecw:EcE24377A_0030"/>
<dbReference type="HOGENOM" id="CLU_036838_2_2_6"/>
<dbReference type="Proteomes" id="UP000001122">
    <property type="component" value="Chromosome"/>
</dbReference>
<dbReference type="GO" id="GO:0005829">
    <property type="term" value="C:cytosol"/>
    <property type="evidence" value="ECO:0007669"/>
    <property type="project" value="TreeGrafter"/>
</dbReference>
<dbReference type="GO" id="GO:0008477">
    <property type="term" value="F:purine nucleosidase activity"/>
    <property type="evidence" value="ECO:0007669"/>
    <property type="project" value="TreeGrafter"/>
</dbReference>
<dbReference type="GO" id="GO:0045437">
    <property type="term" value="F:uridine nucleosidase activity"/>
    <property type="evidence" value="ECO:0007669"/>
    <property type="project" value="UniProtKB-ARBA"/>
</dbReference>
<dbReference type="GO" id="GO:0006144">
    <property type="term" value="P:purine nucleobase metabolic process"/>
    <property type="evidence" value="ECO:0007669"/>
    <property type="project" value="UniProtKB-UniRule"/>
</dbReference>
<dbReference type="GO" id="GO:0006152">
    <property type="term" value="P:purine nucleoside catabolic process"/>
    <property type="evidence" value="ECO:0007669"/>
    <property type="project" value="TreeGrafter"/>
</dbReference>
<dbReference type="GO" id="GO:0006206">
    <property type="term" value="P:pyrimidine nucleobase metabolic process"/>
    <property type="evidence" value="ECO:0007669"/>
    <property type="project" value="UniProtKB-UniRule"/>
</dbReference>
<dbReference type="CDD" id="cd02651">
    <property type="entry name" value="nuc_hydro_IU_UC_XIUA"/>
    <property type="match status" value="1"/>
</dbReference>
<dbReference type="FunFam" id="3.90.245.10:FF:000002">
    <property type="entry name" value="Non-specific ribonucleoside hydrolase RihC"/>
    <property type="match status" value="1"/>
</dbReference>
<dbReference type="Gene3D" id="3.90.245.10">
    <property type="entry name" value="Ribonucleoside hydrolase-like"/>
    <property type="match status" value="1"/>
</dbReference>
<dbReference type="HAMAP" id="MF_01432">
    <property type="entry name" value="Nucleosid_hydro_RihC"/>
    <property type="match status" value="1"/>
</dbReference>
<dbReference type="InterPro" id="IPR015910">
    <property type="entry name" value="I/U_nuclsd_hydro_CS"/>
</dbReference>
<dbReference type="InterPro" id="IPR001910">
    <property type="entry name" value="Inosine/uridine_hydrolase_dom"/>
</dbReference>
<dbReference type="InterPro" id="IPR023186">
    <property type="entry name" value="IUNH"/>
</dbReference>
<dbReference type="InterPro" id="IPR022976">
    <property type="entry name" value="Nucleosid_hydro_RihC_nonspecif"/>
</dbReference>
<dbReference type="InterPro" id="IPR036452">
    <property type="entry name" value="Ribo_hydro-like"/>
</dbReference>
<dbReference type="NCBIfam" id="NF008036">
    <property type="entry name" value="PRK10768.1"/>
    <property type="match status" value="1"/>
</dbReference>
<dbReference type="PANTHER" id="PTHR12304">
    <property type="entry name" value="INOSINE-URIDINE PREFERRING NUCLEOSIDE HYDROLASE"/>
    <property type="match status" value="1"/>
</dbReference>
<dbReference type="PANTHER" id="PTHR12304:SF15">
    <property type="entry name" value="NON-SPECIFIC RIBONUCLEOSIDE HYDROLASE RIHC"/>
    <property type="match status" value="1"/>
</dbReference>
<dbReference type="Pfam" id="PF01156">
    <property type="entry name" value="IU_nuc_hydro"/>
    <property type="match status" value="1"/>
</dbReference>
<dbReference type="SUPFAM" id="SSF53590">
    <property type="entry name" value="Nucleoside hydrolase"/>
    <property type="match status" value="1"/>
</dbReference>
<dbReference type="PROSITE" id="PS01247">
    <property type="entry name" value="IUNH"/>
    <property type="match status" value="1"/>
</dbReference>
<comment type="function">
    <text evidence="1">Hydrolyzes both purine and pyrimidine ribonucleosides with a broad-substrate specificity.</text>
</comment>
<comment type="similarity">
    <text evidence="1">Belongs to the IUNH family. RihC subfamily.</text>
</comment>
<name>RIHC_ECO24</name>
<accession>A7ZHB9</accession>
<sequence>MRLPIFLDTDPGIDDAVAIAAAIFAPELDLQLMTTVAGNVSVEKTTRNALQLLHFWNAEIPLAQGAAVPLVRAPRDAVSVHGESGMAGYDFVEHNRKPLGIPAFLAIRDALMRAPEPVTLVAIGPLTNIALLLSQCPECKPYIRRLVIMGGSAGRGNCTPNAEFNIAADPEAAACVFRSGIEIVMCGLDVTNQAILTPDYLATLPELNRTGKMLHALFSHYRSGSMQSGLRMHDLCAIAWLVRPELFTLKPCFVAVETQGEFTSGTTVVDIDGCLGKPANVKVALDLDVKGFQQWVAEVLALAS</sequence>
<proteinExistence type="inferred from homology"/>
<gene>
    <name evidence="1" type="primary">rihC</name>
    <name type="ordered locus">EcE24377A_0030</name>
</gene>
<feature type="chain" id="PRO_1000068529" description="Non-specific ribonucleoside hydrolase RihC">
    <location>
        <begin position="1"/>
        <end position="304"/>
    </location>
</feature>
<feature type="active site" evidence="1">
    <location>
        <position position="233"/>
    </location>
</feature>
<protein>
    <recommendedName>
        <fullName evidence="1">Non-specific ribonucleoside hydrolase RihC</fullName>
        <ecNumber evidence="1">3.2.-.-</ecNumber>
    </recommendedName>
    <alternativeName>
        <fullName evidence="1">Purine/pyrimidine ribonucleoside hydrolase</fullName>
    </alternativeName>
</protein>
<evidence type="ECO:0000255" key="1">
    <source>
        <dbReference type="HAMAP-Rule" id="MF_01432"/>
    </source>
</evidence>
<organism>
    <name type="scientific">Escherichia coli O139:H28 (strain E24377A / ETEC)</name>
    <dbReference type="NCBI Taxonomy" id="331111"/>
    <lineage>
        <taxon>Bacteria</taxon>
        <taxon>Pseudomonadati</taxon>
        <taxon>Pseudomonadota</taxon>
        <taxon>Gammaproteobacteria</taxon>
        <taxon>Enterobacterales</taxon>
        <taxon>Enterobacteriaceae</taxon>
        <taxon>Escherichia</taxon>
    </lineage>
</organism>
<reference key="1">
    <citation type="journal article" date="2008" name="J. Bacteriol.">
        <title>The pangenome structure of Escherichia coli: comparative genomic analysis of E. coli commensal and pathogenic isolates.</title>
        <authorList>
            <person name="Rasko D.A."/>
            <person name="Rosovitz M.J."/>
            <person name="Myers G.S.A."/>
            <person name="Mongodin E.F."/>
            <person name="Fricke W.F."/>
            <person name="Gajer P."/>
            <person name="Crabtree J."/>
            <person name="Sebaihia M."/>
            <person name="Thomson N.R."/>
            <person name="Chaudhuri R."/>
            <person name="Henderson I.R."/>
            <person name="Sperandio V."/>
            <person name="Ravel J."/>
        </authorList>
    </citation>
    <scope>NUCLEOTIDE SEQUENCE [LARGE SCALE GENOMIC DNA]</scope>
    <source>
        <strain>E24377A / ETEC</strain>
    </source>
</reference>
<keyword id="KW-0326">Glycosidase</keyword>
<keyword id="KW-0378">Hydrolase</keyword>
<keyword id="KW-1185">Reference proteome</keyword>